<organism>
    <name type="scientific">Shewanella baltica (strain OS223)</name>
    <dbReference type="NCBI Taxonomy" id="407976"/>
    <lineage>
        <taxon>Bacteria</taxon>
        <taxon>Pseudomonadati</taxon>
        <taxon>Pseudomonadota</taxon>
        <taxon>Gammaproteobacteria</taxon>
        <taxon>Alteromonadales</taxon>
        <taxon>Shewanellaceae</taxon>
        <taxon>Shewanella</taxon>
    </lineage>
</organism>
<proteinExistence type="inferred from homology"/>
<keyword id="KW-0021">Allosteric enzyme</keyword>
<keyword id="KW-0328">Glycosyltransferase</keyword>
<keyword id="KW-0342">GTP-binding</keyword>
<keyword id="KW-0460">Magnesium</keyword>
<keyword id="KW-0547">Nucleotide-binding</keyword>
<keyword id="KW-0808">Transferase</keyword>
<accession>B8EAL3</accession>
<reference key="1">
    <citation type="submission" date="2008-12" db="EMBL/GenBank/DDBJ databases">
        <title>Complete sequence of chromosome of Shewanella baltica OS223.</title>
        <authorList>
            <consortium name="US DOE Joint Genome Institute"/>
            <person name="Lucas S."/>
            <person name="Copeland A."/>
            <person name="Lapidus A."/>
            <person name="Glavina del Rio T."/>
            <person name="Dalin E."/>
            <person name="Tice H."/>
            <person name="Bruce D."/>
            <person name="Goodwin L."/>
            <person name="Pitluck S."/>
            <person name="Chertkov O."/>
            <person name="Meincke L."/>
            <person name="Brettin T."/>
            <person name="Detter J.C."/>
            <person name="Han C."/>
            <person name="Kuske C.R."/>
            <person name="Larimer F."/>
            <person name="Land M."/>
            <person name="Hauser L."/>
            <person name="Kyrpides N."/>
            <person name="Ovchinnikova G."/>
            <person name="Brettar I."/>
            <person name="Rodrigues J."/>
            <person name="Konstantinidis K."/>
            <person name="Tiedje J."/>
        </authorList>
    </citation>
    <scope>NUCLEOTIDE SEQUENCE [LARGE SCALE GENOMIC DNA]</scope>
    <source>
        <strain>OS223</strain>
    </source>
</reference>
<name>UPP_SHEB2</name>
<feature type="chain" id="PRO_1000164834" description="Uracil phosphoribosyltransferase">
    <location>
        <begin position="1"/>
        <end position="208"/>
    </location>
</feature>
<feature type="binding site" evidence="1">
    <location>
        <position position="78"/>
    </location>
    <ligand>
        <name>5-phospho-alpha-D-ribose 1-diphosphate</name>
        <dbReference type="ChEBI" id="CHEBI:58017"/>
    </ligand>
</feature>
<feature type="binding site" evidence="1">
    <location>
        <position position="103"/>
    </location>
    <ligand>
        <name>5-phospho-alpha-D-ribose 1-diphosphate</name>
        <dbReference type="ChEBI" id="CHEBI:58017"/>
    </ligand>
</feature>
<feature type="binding site" evidence="1">
    <location>
        <begin position="130"/>
        <end position="138"/>
    </location>
    <ligand>
        <name>5-phospho-alpha-D-ribose 1-diphosphate</name>
        <dbReference type="ChEBI" id="CHEBI:58017"/>
    </ligand>
</feature>
<feature type="binding site" evidence="1">
    <location>
        <position position="193"/>
    </location>
    <ligand>
        <name>uracil</name>
        <dbReference type="ChEBI" id="CHEBI:17568"/>
    </ligand>
</feature>
<feature type="binding site" evidence="1">
    <location>
        <begin position="198"/>
        <end position="200"/>
    </location>
    <ligand>
        <name>uracil</name>
        <dbReference type="ChEBI" id="CHEBI:17568"/>
    </ligand>
</feature>
<feature type="binding site" evidence="1">
    <location>
        <position position="199"/>
    </location>
    <ligand>
        <name>5-phospho-alpha-D-ribose 1-diphosphate</name>
        <dbReference type="ChEBI" id="CHEBI:58017"/>
    </ligand>
</feature>
<comment type="function">
    <text evidence="1">Catalyzes the conversion of uracil and 5-phospho-alpha-D-ribose 1-diphosphate (PRPP) to UMP and diphosphate.</text>
</comment>
<comment type="catalytic activity">
    <reaction evidence="1">
        <text>UMP + diphosphate = 5-phospho-alpha-D-ribose 1-diphosphate + uracil</text>
        <dbReference type="Rhea" id="RHEA:13017"/>
        <dbReference type="ChEBI" id="CHEBI:17568"/>
        <dbReference type="ChEBI" id="CHEBI:33019"/>
        <dbReference type="ChEBI" id="CHEBI:57865"/>
        <dbReference type="ChEBI" id="CHEBI:58017"/>
        <dbReference type="EC" id="2.4.2.9"/>
    </reaction>
</comment>
<comment type="cofactor">
    <cofactor evidence="1">
        <name>Mg(2+)</name>
        <dbReference type="ChEBI" id="CHEBI:18420"/>
    </cofactor>
    <text evidence="1">Binds 1 Mg(2+) ion per subunit. The magnesium is bound as Mg-PRPP.</text>
</comment>
<comment type="activity regulation">
    <text evidence="1">Allosterically activated by GTP.</text>
</comment>
<comment type="pathway">
    <text evidence="1">Pyrimidine metabolism; UMP biosynthesis via salvage pathway; UMP from uracil: step 1/1.</text>
</comment>
<comment type="similarity">
    <text evidence="1">Belongs to the UPRTase family.</text>
</comment>
<protein>
    <recommendedName>
        <fullName evidence="1">Uracil phosphoribosyltransferase</fullName>
        <ecNumber evidence="1">2.4.2.9</ecNumber>
    </recommendedName>
    <alternativeName>
        <fullName evidence="1">UMP pyrophosphorylase</fullName>
    </alternativeName>
    <alternativeName>
        <fullName evidence="1">UPRTase</fullName>
    </alternativeName>
</protein>
<dbReference type="EC" id="2.4.2.9" evidence="1"/>
<dbReference type="EMBL" id="CP001252">
    <property type="protein sequence ID" value="ACK47042.1"/>
    <property type="molecule type" value="Genomic_DNA"/>
</dbReference>
<dbReference type="RefSeq" id="WP_006081245.1">
    <property type="nucleotide sequence ID" value="NC_011663.1"/>
</dbReference>
<dbReference type="SMR" id="B8EAL3"/>
<dbReference type="GeneID" id="11771991"/>
<dbReference type="KEGG" id="sbp:Sbal223_2548"/>
<dbReference type="HOGENOM" id="CLU_067096_2_2_6"/>
<dbReference type="UniPathway" id="UPA00574">
    <property type="reaction ID" value="UER00636"/>
</dbReference>
<dbReference type="Proteomes" id="UP000002507">
    <property type="component" value="Chromosome"/>
</dbReference>
<dbReference type="GO" id="GO:0005525">
    <property type="term" value="F:GTP binding"/>
    <property type="evidence" value="ECO:0007669"/>
    <property type="project" value="UniProtKB-KW"/>
</dbReference>
<dbReference type="GO" id="GO:0000287">
    <property type="term" value="F:magnesium ion binding"/>
    <property type="evidence" value="ECO:0007669"/>
    <property type="project" value="UniProtKB-UniRule"/>
</dbReference>
<dbReference type="GO" id="GO:0004845">
    <property type="term" value="F:uracil phosphoribosyltransferase activity"/>
    <property type="evidence" value="ECO:0007669"/>
    <property type="project" value="UniProtKB-UniRule"/>
</dbReference>
<dbReference type="GO" id="GO:0044206">
    <property type="term" value="P:UMP salvage"/>
    <property type="evidence" value="ECO:0007669"/>
    <property type="project" value="UniProtKB-UniRule"/>
</dbReference>
<dbReference type="GO" id="GO:0006223">
    <property type="term" value="P:uracil salvage"/>
    <property type="evidence" value="ECO:0007669"/>
    <property type="project" value="InterPro"/>
</dbReference>
<dbReference type="CDD" id="cd06223">
    <property type="entry name" value="PRTases_typeI"/>
    <property type="match status" value="1"/>
</dbReference>
<dbReference type="FunFam" id="3.40.50.2020:FF:000003">
    <property type="entry name" value="Uracil phosphoribosyltransferase"/>
    <property type="match status" value="1"/>
</dbReference>
<dbReference type="Gene3D" id="3.40.50.2020">
    <property type="match status" value="1"/>
</dbReference>
<dbReference type="HAMAP" id="MF_01218_B">
    <property type="entry name" value="Upp_B"/>
    <property type="match status" value="1"/>
</dbReference>
<dbReference type="InterPro" id="IPR000836">
    <property type="entry name" value="PRibTrfase_dom"/>
</dbReference>
<dbReference type="InterPro" id="IPR029057">
    <property type="entry name" value="PRTase-like"/>
</dbReference>
<dbReference type="InterPro" id="IPR034332">
    <property type="entry name" value="Upp_B"/>
</dbReference>
<dbReference type="InterPro" id="IPR050054">
    <property type="entry name" value="UPRTase/APRTase"/>
</dbReference>
<dbReference type="InterPro" id="IPR005765">
    <property type="entry name" value="Ura_phspho_trans"/>
</dbReference>
<dbReference type="NCBIfam" id="NF001097">
    <property type="entry name" value="PRK00129.1"/>
    <property type="match status" value="1"/>
</dbReference>
<dbReference type="NCBIfam" id="TIGR01091">
    <property type="entry name" value="upp"/>
    <property type="match status" value="1"/>
</dbReference>
<dbReference type="PANTHER" id="PTHR32315">
    <property type="entry name" value="ADENINE PHOSPHORIBOSYLTRANSFERASE"/>
    <property type="match status" value="1"/>
</dbReference>
<dbReference type="PANTHER" id="PTHR32315:SF4">
    <property type="entry name" value="URACIL PHOSPHORIBOSYLTRANSFERASE, CHLOROPLASTIC"/>
    <property type="match status" value="1"/>
</dbReference>
<dbReference type="Pfam" id="PF14681">
    <property type="entry name" value="UPRTase"/>
    <property type="match status" value="1"/>
</dbReference>
<dbReference type="SUPFAM" id="SSF53271">
    <property type="entry name" value="PRTase-like"/>
    <property type="match status" value="1"/>
</dbReference>
<sequence>MKVVEVKHPLVRHKIGLMREGDISTKRFRELAAEVGSLLTYEATADFETETVTIEGWNGPVEVDQIKGKKVTVVPILRAGLGMMDGVLEHIPSARISVVGIYRDEETLEPVPYFEKLASDMNERIALVVDPMLATGGSMIATVDLLKKRGCTSIKALVLVAAPEGIKALEAAHPDIELYTAAIDKCLNEKGYILPGLGDAGDKIFGTK</sequence>
<evidence type="ECO:0000255" key="1">
    <source>
        <dbReference type="HAMAP-Rule" id="MF_01218"/>
    </source>
</evidence>
<gene>
    <name evidence="1" type="primary">upp</name>
    <name type="ordered locus">Sbal223_2548</name>
</gene>